<proteinExistence type="evidence at transcript level"/>
<gene>
    <name type="primary">RpL10</name>
</gene>
<reference key="1">
    <citation type="submission" date="1998-10" db="EMBL/GenBank/DDBJ databases">
        <authorList>
            <person name="Hwang J.S."/>
            <person name="Goo T.W."/>
            <person name="Lee J.H."/>
            <person name="Kang S.W."/>
            <person name="Kim K.Y."/>
            <person name="Kwon O.Y."/>
        </authorList>
    </citation>
    <scope>NUCLEOTIDE SEQUENCE [MRNA]</scope>
</reference>
<dbReference type="EMBL" id="AF099012">
    <property type="protein sequence ID" value="AAC98301.1"/>
    <property type="molecule type" value="mRNA"/>
</dbReference>
<dbReference type="SMR" id="O96647"/>
<dbReference type="EnsemblMetazoa" id="XM_028182327.1">
    <property type="protein sequence ID" value="XP_028038128.1"/>
    <property type="gene ID" value="LOC114248901"/>
</dbReference>
<dbReference type="OrthoDB" id="10258869at2759"/>
<dbReference type="Proteomes" id="UP000504629">
    <property type="component" value="Unplaced"/>
</dbReference>
<dbReference type="GO" id="GO:1990904">
    <property type="term" value="C:ribonucleoprotein complex"/>
    <property type="evidence" value="ECO:0007669"/>
    <property type="project" value="UniProtKB-KW"/>
</dbReference>
<dbReference type="GO" id="GO:0005840">
    <property type="term" value="C:ribosome"/>
    <property type="evidence" value="ECO:0007669"/>
    <property type="project" value="UniProtKB-KW"/>
</dbReference>
<dbReference type="GO" id="GO:0003735">
    <property type="term" value="F:structural constituent of ribosome"/>
    <property type="evidence" value="ECO:0007669"/>
    <property type="project" value="InterPro"/>
</dbReference>
<dbReference type="GO" id="GO:0006412">
    <property type="term" value="P:translation"/>
    <property type="evidence" value="ECO:0007669"/>
    <property type="project" value="InterPro"/>
</dbReference>
<dbReference type="CDD" id="cd01433">
    <property type="entry name" value="Ribosomal_L16_L10e"/>
    <property type="match status" value="1"/>
</dbReference>
<dbReference type="FunFam" id="3.90.1170.10:FF:000002">
    <property type="entry name" value="60S ribosomal protein L10"/>
    <property type="match status" value="1"/>
</dbReference>
<dbReference type="FunFam" id="3.30.60.300:FF:000003">
    <property type="entry name" value="60S ribosomal protein L10, putative"/>
    <property type="match status" value="1"/>
</dbReference>
<dbReference type="Gene3D" id="3.30.60.300">
    <property type="match status" value="1"/>
</dbReference>
<dbReference type="Gene3D" id="3.90.1170.10">
    <property type="entry name" value="Ribosomal protein L10e/L16"/>
    <property type="match status" value="1"/>
</dbReference>
<dbReference type="InterPro" id="IPR047873">
    <property type="entry name" value="Ribosomal_uL16"/>
</dbReference>
<dbReference type="InterPro" id="IPR018255">
    <property type="entry name" value="Ribosomal_uL16_CS_euk_arc"/>
</dbReference>
<dbReference type="InterPro" id="IPR016180">
    <property type="entry name" value="Ribosomal_uL16_dom"/>
</dbReference>
<dbReference type="InterPro" id="IPR001197">
    <property type="entry name" value="Ribosomal_uL16_euk_arch"/>
</dbReference>
<dbReference type="InterPro" id="IPR036920">
    <property type="entry name" value="Ribosomal_uL16_sf"/>
</dbReference>
<dbReference type="NCBIfam" id="NF003239">
    <property type="entry name" value="PRK04199.1-4"/>
    <property type="match status" value="1"/>
</dbReference>
<dbReference type="NCBIfam" id="TIGR00279">
    <property type="entry name" value="uL16_euk_arch"/>
    <property type="match status" value="1"/>
</dbReference>
<dbReference type="PANTHER" id="PTHR11726">
    <property type="entry name" value="60S RIBOSOMAL PROTEIN L10"/>
    <property type="match status" value="1"/>
</dbReference>
<dbReference type="Pfam" id="PF00252">
    <property type="entry name" value="Ribosomal_L16"/>
    <property type="match status" value="1"/>
</dbReference>
<dbReference type="PIRSF" id="PIRSF005590">
    <property type="entry name" value="Ribosomal_L10"/>
    <property type="match status" value="1"/>
</dbReference>
<dbReference type="SUPFAM" id="SSF54686">
    <property type="entry name" value="Ribosomal protein L16p/L10e"/>
    <property type="match status" value="1"/>
</dbReference>
<dbReference type="PROSITE" id="PS01257">
    <property type="entry name" value="RIBOSOMAL_L10E"/>
    <property type="match status" value="1"/>
</dbReference>
<accession>O96647</accession>
<comment type="subunit">
    <text evidence="1">Component of the large ribosomal subunit. Mature ribosomes consist of a small (40S) and a large (60S) subunit. The 40S subunit contains about 33 different proteins and 1 molecule of RNA (18S). The 60S subunit contains about 49 different proteins and 3 molecules of RNA (28S, 5.8S and 5S) (By similarity).</text>
</comment>
<comment type="similarity">
    <text evidence="2">Belongs to the universal ribosomal protein uL16 family.</text>
</comment>
<protein>
    <recommendedName>
        <fullName evidence="2">Large ribosomal subunit protein uL16</fullName>
    </recommendedName>
    <alternativeName>
        <fullName>60S ribosomal protein L10</fullName>
    </alternativeName>
    <alternativeName>
        <fullName>QM protein homolog</fullName>
    </alternativeName>
</protein>
<sequence>MGRRPARCYRYCKNKPYPKSRFCRGVPDPKIRIFDLGKKRANVDDFPLCVHLVSDEYEQLSSEALEAGRICCNKYLVKNCGKDQFHIRMRLHPFHVIRINKMLSCAGADRLQTGMRGAFGKPQGTVARVRIGQPIMSVRSSDRWKAQVIEALRRAKFKFPGRQKIYVSKKWGFTKYERDEFEKLREEGRLANDGCIVQYRPEHGPLDAWRKVQAEILNV</sequence>
<name>RL10_BOMMA</name>
<evidence type="ECO:0000250" key="1"/>
<evidence type="ECO:0000305" key="2"/>
<keyword id="KW-0687">Ribonucleoprotein</keyword>
<keyword id="KW-0689">Ribosomal protein</keyword>
<organism>
    <name type="scientific">Bombyx mandarina</name>
    <name type="common">Wild silk moth</name>
    <name type="synonym">Wild silkworm</name>
    <dbReference type="NCBI Taxonomy" id="7092"/>
    <lineage>
        <taxon>Eukaryota</taxon>
        <taxon>Metazoa</taxon>
        <taxon>Ecdysozoa</taxon>
        <taxon>Arthropoda</taxon>
        <taxon>Hexapoda</taxon>
        <taxon>Insecta</taxon>
        <taxon>Pterygota</taxon>
        <taxon>Neoptera</taxon>
        <taxon>Endopterygota</taxon>
        <taxon>Lepidoptera</taxon>
        <taxon>Glossata</taxon>
        <taxon>Ditrysia</taxon>
        <taxon>Bombycoidea</taxon>
        <taxon>Bombycidae</taxon>
        <taxon>Bombycinae</taxon>
        <taxon>Bombyx</taxon>
    </lineage>
</organism>
<feature type="chain" id="PRO_0000147113" description="Large ribosomal subunit protein uL16">
    <location>
        <begin position="1"/>
        <end position="219"/>
    </location>
</feature>